<name>GAL1_ERWT9</name>
<reference key="1">
    <citation type="journal article" date="2008" name="Environ. Microbiol.">
        <title>The genome of Erwinia tasmaniensis strain Et1/99, a non-pathogenic bacterium in the genus Erwinia.</title>
        <authorList>
            <person name="Kube M."/>
            <person name="Migdoll A.M."/>
            <person name="Mueller I."/>
            <person name="Kuhl H."/>
            <person name="Beck A."/>
            <person name="Reinhardt R."/>
            <person name="Geider K."/>
        </authorList>
    </citation>
    <scope>NUCLEOTIDE SEQUENCE [LARGE SCALE GENOMIC DNA]</scope>
    <source>
        <strain>DSM 17950 / CFBP 7177 / CIP 109463 / NCPPB 4357 / Et1/99</strain>
    </source>
</reference>
<evidence type="ECO:0000255" key="1">
    <source>
        <dbReference type="HAMAP-Rule" id="MF_00246"/>
    </source>
</evidence>
<proteinExistence type="inferred from homology"/>
<sequence>MSLQTTTQQIFSCAFGYAPTHTVQAPGRVNLIGEHTDYNDGFVLPCAIDYQTVIACAKRSDRQVRTIAVDYDNQQDIFSLDEPIERHPQQLWSDYVRGVVKYLQQRAADLGGVDMVISGNVPQGAGLSSSASLEVAVGSVFRQLYQLPLSSADIALNGQQAENQFVGCHCGIMDQMISALGEKNSAMLLDCRTLDTRAVPMPSDIAVVIINTNFKRNLVGSEYNTRRQQCEAGARFFGQSSLRDVELAEFAEREHELDPLVAKRVRHVLTENARTLEAANVLARGDLARLAVLMAESHASMRDDFEITVPAVDMLVDIVKTSLGERGGVRMTGGGFGGCVVALMPRERVASVKAAVEQHYQAESGLKETFYVCTASAGAGLC</sequence>
<organism>
    <name type="scientific">Erwinia tasmaniensis (strain DSM 17950 / CFBP 7177 / CIP 109463 / NCPPB 4357 / Et1/99)</name>
    <dbReference type="NCBI Taxonomy" id="465817"/>
    <lineage>
        <taxon>Bacteria</taxon>
        <taxon>Pseudomonadati</taxon>
        <taxon>Pseudomonadota</taxon>
        <taxon>Gammaproteobacteria</taxon>
        <taxon>Enterobacterales</taxon>
        <taxon>Erwiniaceae</taxon>
        <taxon>Erwinia</taxon>
    </lineage>
</organism>
<dbReference type="EC" id="2.7.1.6" evidence="1"/>
<dbReference type="EMBL" id="CU468135">
    <property type="protein sequence ID" value="CAO97325.1"/>
    <property type="molecule type" value="Genomic_DNA"/>
</dbReference>
<dbReference type="RefSeq" id="WP_012441994.1">
    <property type="nucleotide sequence ID" value="NC_010694.1"/>
</dbReference>
<dbReference type="SMR" id="B2VBV2"/>
<dbReference type="STRING" id="465817.ETA_22790"/>
<dbReference type="KEGG" id="eta:ETA_22790"/>
<dbReference type="eggNOG" id="COG0153">
    <property type="taxonomic scope" value="Bacteria"/>
</dbReference>
<dbReference type="HOGENOM" id="CLU_017814_2_1_6"/>
<dbReference type="OrthoDB" id="250531at2"/>
<dbReference type="UniPathway" id="UPA00214"/>
<dbReference type="Proteomes" id="UP000001726">
    <property type="component" value="Chromosome"/>
</dbReference>
<dbReference type="GO" id="GO:0005829">
    <property type="term" value="C:cytosol"/>
    <property type="evidence" value="ECO:0007669"/>
    <property type="project" value="TreeGrafter"/>
</dbReference>
<dbReference type="GO" id="GO:0005524">
    <property type="term" value="F:ATP binding"/>
    <property type="evidence" value="ECO:0007669"/>
    <property type="project" value="UniProtKB-UniRule"/>
</dbReference>
<dbReference type="GO" id="GO:0004335">
    <property type="term" value="F:galactokinase activity"/>
    <property type="evidence" value="ECO:0007669"/>
    <property type="project" value="UniProtKB-UniRule"/>
</dbReference>
<dbReference type="GO" id="GO:0000287">
    <property type="term" value="F:magnesium ion binding"/>
    <property type="evidence" value="ECO:0007669"/>
    <property type="project" value="UniProtKB-UniRule"/>
</dbReference>
<dbReference type="GO" id="GO:0006012">
    <property type="term" value="P:galactose metabolic process"/>
    <property type="evidence" value="ECO:0007669"/>
    <property type="project" value="UniProtKB-UniRule"/>
</dbReference>
<dbReference type="FunFam" id="3.30.230.10:FF:000017">
    <property type="entry name" value="Galactokinase"/>
    <property type="match status" value="1"/>
</dbReference>
<dbReference type="FunFam" id="3.30.70.890:FF:000001">
    <property type="entry name" value="Galactokinase"/>
    <property type="match status" value="1"/>
</dbReference>
<dbReference type="Gene3D" id="3.30.230.10">
    <property type="match status" value="1"/>
</dbReference>
<dbReference type="Gene3D" id="3.30.70.890">
    <property type="entry name" value="GHMP kinase, C-terminal domain"/>
    <property type="match status" value="1"/>
</dbReference>
<dbReference type="HAMAP" id="MF_00246">
    <property type="entry name" value="Galactokinase"/>
    <property type="match status" value="1"/>
</dbReference>
<dbReference type="InterPro" id="IPR000705">
    <property type="entry name" value="Galactokinase"/>
</dbReference>
<dbReference type="InterPro" id="IPR022963">
    <property type="entry name" value="Galactokinase_bac"/>
</dbReference>
<dbReference type="InterPro" id="IPR019741">
    <property type="entry name" value="Galactokinase_CS"/>
</dbReference>
<dbReference type="InterPro" id="IPR019539">
    <property type="entry name" value="GalKase_N"/>
</dbReference>
<dbReference type="InterPro" id="IPR013750">
    <property type="entry name" value="GHMP_kinase_C_dom"/>
</dbReference>
<dbReference type="InterPro" id="IPR036554">
    <property type="entry name" value="GHMP_kinase_C_sf"/>
</dbReference>
<dbReference type="InterPro" id="IPR006204">
    <property type="entry name" value="GHMP_kinase_N_dom"/>
</dbReference>
<dbReference type="InterPro" id="IPR006203">
    <property type="entry name" value="GHMP_knse_ATP-bd_CS"/>
</dbReference>
<dbReference type="InterPro" id="IPR006206">
    <property type="entry name" value="Mevalonate/galactokinase"/>
</dbReference>
<dbReference type="InterPro" id="IPR020568">
    <property type="entry name" value="Ribosomal_Su5_D2-typ_SF"/>
</dbReference>
<dbReference type="InterPro" id="IPR014721">
    <property type="entry name" value="Ribsml_uS5_D2-typ_fold_subgr"/>
</dbReference>
<dbReference type="NCBIfam" id="TIGR00131">
    <property type="entry name" value="gal_kin"/>
    <property type="match status" value="1"/>
</dbReference>
<dbReference type="NCBIfam" id="NF003472">
    <property type="entry name" value="PRK05101.1"/>
    <property type="match status" value="1"/>
</dbReference>
<dbReference type="PANTHER" id="PTHR10457:SF7">
    <property type="entry name" value="GALACTOKINASE-RELATED"/>
    <property type="match status" value="1"/>
</dbReference>
<dbReference type="PANTHER" id="PTHR10457">
    <property type="entry name" value="MEVALONATE KINASE/GALACTOKINASE"/>
    <property type="match status" value="1"/>
</dbReference>
<dbReference type="Pfam" id="PF10509">
    <property type="entry name" value="GalKase_gal_bdg"/>
    <property type="match status" value="1"/>
</dbReference>
<dbReference type="Pfam" id="PF08544">
    <property type="entry name" value="GHMP_kinases_C"/>
    <property type="match status" value="1"/>
</dbReference>
<dbReference type="Pfam" id="PF00288">
    <property type="entry name" value="GHMP_kinases_N"/>
    <property type="match status" value="1"/>
</dbReference>
<dbReference type="PIRSF" id="PIRSF000530">
    <property type="entry name" value="Galactokinase"/>
    <property type="match status" value="1"/>
</dbReference>
<dbReference type="PRINTS" id="PR00473">
    <property type="entry name" value="GALCTOKINASE"/>
</dbReference>
<dbReference type="PRINTS" id="PR00959">
    <property type="entry name" value="MEVGALKINASE"/>
</dbReference>
<dbReference type="SUPFAM" id="SSF55060">
    <property type="entry name" value="GHMP Kinase, C-terminal domain"/>
    <property type="match status" value="1"/>
</dbReference>
<dbReference type="SUPFAM" id="SSF54211">
    <property type="entry name" value="Ribosomal protein S5 domain 2-like"/>
    <property type="match status" value="1"/>
</dbReference>
<dbReference type="PROSITE" id="PS00106">
    <property type="entry name" value="GALACTOKINASE"/>
    <property type="match status" value="1"/>
</dbReference>
<dbReference type="PROSITE" id="PS00627">
    <property type="entry name" value="GHMP_KINASES_ATP"/>
    <property type="match status" value="1"/>
</dbReference>
<comment type="function">
    <text evidence="1">Catalyzes the transfer of the gamma-phosphate of ATP to D-galactose to form alpha-D-galactose-1-phosphate (Gal-1-P).</text>
</comment>
<comment type="catalytic activity">
    <reaction evidence="1">
        <text>alpha-D-galactose + ATP = alpha-D-galactose 1-phosphate + ADP + H(+)</text>
        <dbReference type="Rhea" id="RHEA:13553"/>
        <dbReference type="ChEBI" id="CHEBI:15378"/>
        <dbReference type="ChEBI" id="CHEBI:28061"/>
        <dbReference type="ChEBI" id="CHEBI:30616"/>
        <dbReference type="ChEBI" id="CHEBI:58336"/>
        <dbReference type="ChEBI" id="CHEBI:456216"/>
        <dbReference type="EC" id="2.7.1.6"/>
    </reaction>
</comment>
<comment type="pathway">
    <text evidence="1">Carbohydrate metabolism; galactose metabolism.</text>
</comment>
<comment type="subcellular location">
    <subcellularLocation>
        <location evidence="1">Cytoplasm</location>
    </subcellularLocation>
</comment>
<comment type="similarity">
    <text evidence="1">Belongs to the GHMP kinase family. GalK subfamily.</text>
</comment>
<protein>
    <recommendedName>
        <fullName evidence="1">Galactokinase</fullName>
        <ecNumber evidence="1">2.7.1.6</ecNumber>
    </recommendedName>
    <alternativeName>
        <fullName evidence="1">Galactose kinase</fullName>
    </alternativeName>
</protein>
<accession>B2VBV2</accession>
<gene>
    <name evidence="1" type="primary">galK</name>
    <name type="ordered locus">ETA_22790</name>
</gene>
<keyword id="KW-0067">ATP-binding</keyword>
<keyword id="KW-0119">Carbohydrate metabolism</keyword>
<keyword id="KW-0963">Cytoplasm</keyword>
<keyword id="KW-0299">Galactose metabolism</keyword>
<keyword id="KW-0418">Kinase</keyword>
<keyword id="KW-0460">Magnesium</keyword>
<keyword id="KW-0479">Metal-binding</keyword>
<keyword id="KW-0547">Nucleotide-binding</keyword>
<keyword id="KW-1185">Reference proteome</keyword>
<keyword id="KW-0808">Transferase</keyword>
<feature type="chain" id="PRO_1000100829" description="Galactokinase">
    <location>
        <begin position="1"/>
        <end position="382"/>
    </location>
</feature>
<feature type="active site" description="Proton acceptor" evidence="1">
    <location>
        <position position="174"/>
    </location>
</feature>
<feature type="binding site" evidence="1">
    <location>
        <begin position="34"/>
        <end position="37"/>
    </location>
    <ligand>
        <name>substrate</name>
    </ligand>
</feature>
<feature type="binding site" evidence="1">
    <location>
        <begin position="124"/>
        <end position="130"/>
    </location>
    <ligand>
        <name>ATP</name>
        <dbReference type="ChEBI" id="CHEBI:30616"/>
    </ligand>
</feature>
<feature type="binding site" evidence="1">
    <location>
        <position position="130"/>
    </location>
    <ligand>
        <name>Mg(2+)</name>
        <dbReference type="ChEBI" id="CHEBI:18420"/>
    </ligand>
</feature>
<feature type="binding site" evidence="1">
    <location>
        <position position="162"/>
    </location>
    <ligand>
        <name>Mg(2+)</name>
        <dbReference type="ChEBI" id="CHEBI:18420"/>
    </ligand>
</feature>
<feature type="binding site" evidence="1">
    <location>
        <position position="223"/>
    </location>
    <ligand>
        <name>substrate</name>
    </ligand>
</feature>
<feature type="site" description="Transition state stabilizer" evidence="1">
    <location>
        <position position="28"/>
    </location>
</feature>